<sequence>MLVLGIESSCDETGLALYDTERGLLAHALHSQIAMHREYGGVVPELASRDHIRRALPLLEEVLAASGARRDDIDAIAFTQGPGLAGALLVGASIANALAFAWDKPTIGIHHLEGHLLSPLLVAEPPPFPFVALLVSGGHTQLMRVSDVGVYETLGETLDDAAGEAFDKTAKLLGLGYPGGPEVSRLAEAGTPGAVVLPRPMLHSGDLDFSFSGLKTAVLTQMKKLEAAHAGGAVLERAKADLARGFVDAAVDVLVAKSLAALKATRLKRLVVAGGVGANRQLRAALSAAAQKRGFDVHYPDLALCTDNGAMIALAGALRLARWPSQASRDYAFTVKPRWDLASLAR</sequence>
<proteinExistence type="inferred from homology"/>
<accession>Q62DT7</accession>
<evidence type="ECO:0000255" key="1">
    <source>
        <dbReference type="HAMAP-Rule" id="MF_01445"/>
    </source>
</evidence>
<organism>
    <name type="scientific">Burkholderia mallei (strain ATCC 23344)</name>
    <dbReference type="NCBI Taxonomy" id="243160"/>
    <lineage>
        <taxon>Bacteria</taxon>
        <taxon>Pseudomonadati</taxon>
        <taxon>Pseudomonadota</taxon>
        <taxon>Betaproteobacteria</taxon>
        <taxon>Burkholderiales</taxon>
        <taxon>Burkholderiaceae</taxon>
        <taxon>Burkholderia</taxon>
        <taxon>pseudomallei group</taxon>
    </lineage>
</organism>
<protein>
    <recommendedName>
        <fullName evidence="1">tRNA N6-adenosine threonylcarbamoyltransferase</fullName>
        <ecNumber evidence="1">2.3.1.234</ecNumber>
    </recommendedName>
    <alternativeName>
        <fullName evidence="1">N6-L-threonylcarbamoyladenine synthase</fullName>
        <shortName evidence="1">t(6)A synthase</shortName>
    </alternativeName>
    <alternativeName>
        <fullName evidence="1">t(6)A37 threonylcarbamoyladenosine biosynthesis protein TsaD</fullName>
    </alternativeName>
    <alternativeName>
        <fullName evidence="1">tRNA threonylcarbamoyladenosine biosynthesis protein TsaD</fullName>
    </alternativeName>
</protein>
<dbReference type="EC" id="2.3.1.234" evidence="1"/>
<dbReference type="EMBL" id="CP000011">
    <property type="protein sequence ID" value="AAU45979.1"/>
    <property type="molecule type" value="Genomic_DNA"/>
</dbReference>
<dbReference type="RefSeq" id="WP_011204325.1">
    <property type="nucleotide sequence ID" value="NC_006349.2"/>
</dbReference>
<dbReference type="RefSeq" id="YP_105141.1">
    <property type="nucleotide sequence ID" value="NC_006349.2"/>
</dbReference>
<dbReference type="SMR" id="Q62DT7"/>
<dbReference type="GeneID" id="92976973"/>
<dbReference type="KEGG" id="bma:BMAA0334"/>
<dbReference type="PATRIC" id="fig|243160.12.peg.3829"/>
<dbReference type="eggNOG" id="COG0533">
    <property type="taxonomic scope" value="Bacteria"/>
</dbReference>
<dbReference type="HOGENOM" id="CLU_023208_0_2_4"/>
<dbReference type="Proteomes" id="UP000006693">
    <property type="component" value="Chromosome 2"/>
</dbReference>
<dbReference type="GO" id="GO:0005737">
    <property type="term" value="C:cytoplasm"/>
    <property type="evidence" value="ECO:0007669"/>
    <property type="project" value="UniProtKB-SubCell"/>
</dbReference>
<dbReference type="GO" id="GO:0005506">
    <property type="term" value="F:iron ion binding"/>
    <property type="evidence" value="ECO:0007669"/>
    <property type="project" value="UniProtKB-UniRule"/>
</dbReference>
<dbReference type="GO" id="GO:0061711">
    <property type="term" value="F:N(6)-L-threonylcarbamoyladenine synthase activity"/>
    <property type="evidence" value="ECO:0007669"/>
    <property type="project" value="UniProtKB-EC"/>
</dbReference>
<dbReference type="GO" id="GO:0002949">
    <property type="term" value="P:tRNA threonylcarbamoyladenosine modification"/>
    <property type="evidence" value="ECO:0007669"/>
    <property type="project" value="UniProtKB-UniRule"/>
</dbReference>
<dbReference type="CDD" id="cd24133">
    <property type="entry name" value="ASKHA_NBD_TsaD_bac"/>
    <property type="match status" value="1"/>
</dbReference>
<dbReference type="FunFam" id="3.30.420.40:FF:000012">
    <property type="entry name" value="tRNA N6-adenosine threonylcarbamoyltransferase"/>
    <property type="match status" value="1"/>
</dbReference>
<dbReference type="FunFam" id="3.30.420.40:FF:000040">
    <property type="entry name" value="tRNA N6-adenosine threonylcarbamoyltransferase"/>
    <property type="match status" value="1"/>
</dbReference>
<dbReference type="Gene3D" id="3.30.420.40">
    <property type="match status" value="2"/>
</dbReference>
<dbReference type="HAMAP" id="MF_01445">
    <property type="entry name" value="TsaD"/>
    <property type="match status" value="1"/>
</dbReference>
<dbReference type="InterPro" id="IPR043129">
    <property type="entry name" value="ATPase_NBD"/>
</dbReference>
<dbReference type="InterPro" id="IPR000905">
    <property type="entry name" value="Gcp-like_dom"/>
</dbReference>
<dbReference type="InterPro" id="IPR017861">
    <property type="entry name" value="KAE1/TsaD"/>
</dbReference>
<dbReference type="InterPro" id="IPR022450">
    <property type="entry name" value="TsaD"/>
</dbReference>
<dbReference type="NCBIfam" id="TIGR00329">
    <property type="entry name" value="gcp_kae1"/>
    <property type="match status" value="1"/>
</dbReference>
<dbReference type="NCBIfam" id="TIGR03723">
    <property type="entry name" value="T6A_TsaD_YgjD"/>
    <property type="match status" value="1"/>
</dbReference>
<dbReference type="PANTHER" id="PTHR11735">
    <property type="entry name" value="TRNA N6-ADENOSINE THREONYLCARBAMOYLTRANSFERASE"/>
    <property type="match status" value="1"/>
</dbReference>
<dbReference type="PANTHER" id="PTHR11735:SF6">
    <property type="entry name" value="TRNA N6-ADENOSINE THREONYLCARBAMOYLTRANSFERASE, MITOCHONDRIAL"/>
    <property type="match status" value="1"/>
</dbReference>
<dbReference type="Pfam" id="PF00814">
    <property type="entry name" value="TsaD"/>
    <property type="match status" value="1"/>
</dbReference>
<dbReference type="PRINTS" id="PR00789">
    <property type="entry name" value="OSIALOPTASE"/>
</dbReference>
<dbReference type="SUPFAM" id="SSF53067">
    <property type="entry name" value="Actin-like ATPase domain"/>
    <property type="match status" value="2"/>
</dbReference>
<comment type="function">
    <text evidence="1">Required for the formation of a threonylcarbamoyl group on adenosine at position 37 (t(6)A37) in tRNAs that read codons beginning with adenine. Is involved in the transfer of the threonylcarbamoyl moiety of threonylcarbamoyl-AMP (TC-AMP) to the N6 group of A37, together with TsaE and TsaB. TsaD likely plays a direct catalytic role in this reaction.</text>
</comment>
<comment type="catalytic activity">
    <reaction evidence="1">
        <text>L-threonylcarbamoyladenylate + adenosine(37) in tRNA = N(6)-L-threonylcarbamoyladenosine(37) in tRNA + AMP + H(+)</text>
        <dbReference type="Rhea" id="RHEA:37059"/>
        <dbReference type="Rhea" id="RHEA-COMP:10162"/>
        <dbReference type="Rhea" id="RHEA-COMP:10163"/>
        <dbReference type="ChEBI" id="CHEBI:15378"/>
        <dbReference type="ChEBI" id="CHEBI:73682"/>
        <dbReference type="ChEBI" id="CHEBI:74411"/>
        <dbReference type="ChEBI" id="CHEBI:74418"/>
        <dbReference type="ChEBI" id="CHEBI:456215"/>
        <dbReference type="EC" id="2.3.1.234"/>
    </reaction>
</comment>
<comment type="cofactor">
    <cofactor evidence="1">
        <name>Fe(2+)</name>
        <dbReference type="ChEBI" id="CHEBI:29033"/>
    </cofactor>
    <text evidence="1">Binds 1 Fe(2+) ion per subunit.</text>
</comment>
<comment type="subcellular location">
    <subcellularLocation>
        <location evidence="1">Cytoplasm</location>
    </subcellularLocation>
</comment>
<comment type="similarity">
    <text evidence="1">Belongs to the KAE1 / TsaD family.</text>
</comment>
<feature type="chain" id="PRO_0000303302" description="tRNA N6-adenosine threonylcarbamoyltransferase">
    <location>
        <begin position="1"/>
        <end position="346"/>
    </location>
</feature>
<feature type="binding site" evidence="1">
    <location>
        <position position="111"/>
    </location>
    <ligand>
        <name>Fe cation</name>
        <dbReference type="ChEBI" id="CHEBI:24875"/>
    </ligand>
</feature>
<feature type="binding site" evidence="1">
    <location>
        <position position="115"/>
    </location>
    <ligand>
        <name>Fe cation</name>
        <dbReference type="ChEBI" id="CHEBI:24875"/>
    </ligand>
</feature>
<feature type="binding site" evidence="1">
    <location>
        <begin position="134"/>
        <end position="138"/>
    </location>
    <ligand>
        <name>substrate</name>
    </ligand>
</feature>
<feature type="binding site" evidence="1">
    <location>
        <position position="167"/>
    </location>
    <ligand>
        <name>substrate</name>
    </ligand>
</feature>
<feature type="binding site" evidence="1">
    <location>
        <position position="180"/>
    </location>
    <ligand>
        <name>substrate</name>
    </ligand>
</feature>
<feature type="binding site" evidence="1">
    <location>
        <position position="279"/>
    </location>
    <ligand>
        <name>substrate</name>
    </ligand>
</feature>
<feature type="binding site" evidence="1">
    <location>
        <position position="307"/>
    </location>
    <ligand>
        <name>Fe cation</name>
        <dbReference type="ChEBI" id="CHEBI:24875"/>
    </ligand>
</feature>
<keyword id="KW-0012">Acyltransferase</keyword>
<keyword id="KW-0963">Cytoplasm</keyword>
<keyword id="KW-0408">Iron</keyword>
<keyword id="KW-0479">Metal-binding</keyword>
<keyword id="KW-1185">Reference proteome</keyword>
<keyword id="KW-0808">Transferase</keyword>
<keyword id="KW-0819">tRNA processing</keyword>
<reference key="1">
    <citation type="journal article" date="2004" name="Proc. Natl. Acad. Sci. U.S.A.">
        <title>Structural flexibility in the Burkholderia mallei genome.</title>
        <authorList>
            <person name="Nierman W.C."/>
            <person name="DeShazer D."/>
            <person name="Kim H.S."/>
            <person name="Tettelin H."/>
            <person name="Nelson K.E."/>
            <person name="Feldblyum T.V."/>
            <person name="Ulrich R.L."/>
            <person name="Ronning C.M."/>
            <person name="Brinkac L.M."/>
            <person name="Daugherty S.C."/>
            <person name="Davidsen T.D."/>
            <person name="DeBoy R.T."/>
            <person name="Dimitrov G."/>
            <person name="Dodson R.J."/>
            <person name="Durkin A.S."/>
            <person name="Gwinn M.L."/>
            <person name="Haft D.H."/>
            <person name="Khouri H.M."/>
            <person name="Kolonay J.F."/>
            <person name="Madupu R."/>
            <person name="Mohammoud Y."/>
            <person name="Nelson W.C."/>
            <person name="Radune D."/>
            <person name="Romero C.M."/>
            <person name="Sarria S."/>
            <person name="Selengut J."/>
            <person name="Shamblin C."/>
            <person name="Sullivan S.A."/>
            <person name="White O."/>
            <person name="Yu Y."/>
            <person name="Zafar N."/>
            <person name="Zhou L."/>
            <person name="Fraser C.M."/>
        </authorList>
    </citation>
    <scope>NUCLEOTIDE SEQUENCE [LARGE SCALE GENOMIC DNA]</scope>
    <source>
        <strain>ATCC 23344</strain>
    </source>
</reference>
<name>TSAD_BURMA</name>
<gene>
    <name evidence="1" type="primary">tsaD</name>
    <name type="synonym">gcp</name>
    <name type="ordered locus">BMAA0334</name>
</gene>